<gene>
    <name evidence="1" type="primary">nadE</name>
    <name type="ordered locus">SEQ_1792</name>
</gene>
<proteinExistence type="inferred from homology"/>
<protein>
    <recommendedName>
        <fullName evidence="1">NH(3)-dependent NAD(+) synthetase</fullName>
        <ecNumber evidence="1">6.3.1.5</ecNumber>
    </recommendedName>
</protein>
<dbReference type="EC" id="6.3.1.5" evidence="1"/>
<dbReference type="EMBL" id="FM204883">
    <property type="protein sequence ID" value="CAW94917.1"/>
    <property type="molecule type" value="Genomic_DNA"/>
</dbReference>
<dbReference type="RefSeq" id="WP_012680009.1">
    <property type="nucleotide sequence ID" value="NC_012471.1"/>
</dbReference>
<dbReference type="SMR" id="C0M795"/>
<dbReference type="KEGG" id="seu:SEQ_1792"/>
<dbReference type="HOGENOM" id="CLU_059327_3_0_9"/>
<dbReference type="OrthoDB" id="9803818at2"/>
<dbReference type="UniPathway" id="UPA00253">
    <property type="reaction ID" value="UER00333"/>
</dbReference>
<dbReference type="Proteomes" id="UP000001365">
    <property type="component" value="Chromosome"/>
</dbReference>
<dbReference type="GO" id="GO:0005737">
    <property type="term" value="C:cytoplasm"/>
    <property type="evidence" value="ECO:0007669"/>
    <property type="project" value="InterPro"/>
</dbReference>
<dbReference type="GO" id="GO:0005524">
    <property type="term" value="F:ATP binding"/>
    <property type="evidence" value="ECO:0007669"/>
    <property type="project" value="UniProtKB-UniRule"/>
</dbReference>
<dbReference type="GO" id="GO:0004359">
    <property type="term" value="F:glutaminase activity"/>
    <property type="evidence" value="ECO:0007669"/>
    <property type="project" value="InterPro"/>
</dbReference>
<dbReference type="GO" id="GO:0046872">
    <property type="term" value="F:metal ion binding"/>
    <property type="evidence" value="ECO:0007669"/>
    <property type="project" value="UniProtKB-KW"/>
</dbReference>
<dbReference type="GO" id="GO:0003952">
    <property type="term" value="F:NAD+ synthase (glutamine-hydrolyzing) activity"/>
    <property type="evidence" value="ECO:0007669"/>
    <property type="project" value="InterPro"/>
</dbReference>
<dbReference type="GO" id="GO:0008795">
    <property type="term" value="F:NAD+ synthase activity"/>
    <property type="evidence" value="ECO:0007669"/>
    <property type="project" value="UniProtKB-UniRule"/>
</dbReference>
<dbReference type="GO" id="GO:0009435">
    <property type="term" value="P:NAD biosynthetic process"/>
    <property type="evidence" value="ECO:0007669"/>
    <property type="project" value="UniProtKB-UniRule"/>
</dbReference>
<dbReference type="CDD" id="cd00553">
    <property type="entry name" value="NAD_synthase"/>
    <property type="match status" value="1"/>
</dbReference>
<dbReference type="FunFam" id="3.40.50.620:FF:000015">
    <property type="entry name" value="NH(3)-dependent NAD(+) synthetase"/>
    <property type="match status" value="1"/>
</dbReference>
<dbReference type="Gene3D" id="3.40.50.620">
    <property type="entry name" value="HUPs"/>
    <property type="match status" value="1"/>
</dbReference>
<dbReference type="HAMAP" id="MF_00193">
    <property type="entry name" value="NadE_ammonia_dep"/>
    <property type="match status" value="1"/>
</dbReference>
<dbReference type="InterPro" id="IPR022310">
    <property type="entry name" value="NAD/GMP_synthase"/>
</dbReference>
<dbReference type="InterPro" id="IPR003694">
    <property type="entry name" value="NAD_synthase"/>
</dbReference>
<dbReference type="InterPro" id="IPR022926">
    <property type="entry name" value="NH(3)-dep_NAD(+)_synth"/>
</dbReference>
<dbReference type="InterPro" id="IPR014729">
    <property type="entry name" value="Rossmann-like_a/b/a_fold"/>
</dbReference>
<dbReference type="NCBIfam" id="TIGR00552">
    <property type="entry name" value="nadE"/>
    <property type="match status" value="1"/>
</dbReference>
<dbReference type="NCBIfam" id="NF001979">
    <property type="entry name" value="PRK00768.1"/>
    <property type="match status" value="1"/>
</dbReference>
<dbReference type="PANTHER" id="PTHR23090">
    <property type="entry name" value="NH 3 /GLUTAMINE-DEPENDENT NAD + SYNTHETASE"/>
    <property type="match status" value="1"/>
</dbReference>
<dbReference type="PANTHER" id="PTHR23090:SF7">
    <property type="entry name" value="NH(3)-DEPENDENT NAD(+) SYNTHETASE"/>
    <property type="match status" value="1"/>
</dbReference>
<dbReference type="Pfam" id="PF02540">
    <property type="entry name" value="NAD_synthase"/>
    <property type="match status" value="1"/>
</dbReference>
<dbReference type="SUPFAM" id="SSF52402">
    <property type="entry name" value="Adenine nucleotide alpha hydrolases-like"/>
    <property type="match status" value="1"/>
</dbReference>
<keyword id="KW-0067">ATP-binding</keyword>
<keyword id="KW-0436">Ligase</keyword>
<keyword id="KW-0460">Magnesium</keyword>
<keyword id="KW-0479">Metal-binding</keyword>
<keyword id="KW-0520">NAD</keyword>
<keyword id="KW-0547">Nucleotide-binding</keyword>
<evidence type="ECO:0000255" key="1">
    <source>
        <dbReference type="HAMAP-Rule" id="MF_00193"/>
    </source>
</evidence>
<comment type="function">
    <text evidence="1">Catalyzes the ATP-dependent amidation of deamido-NAD to form NAD. Uses ammonia as a nitrogen source.</text>
</comment>
<comment type="catalytic activity">
    <reaction evidence="1">
        <text>deamido-NAD(+) + NH4(+) + ATP = AMP + diphosphate + NAD(+) + H(+)</text>
        <dbReference type="Rhea" id="RHEA:21188"/>
        <dbReference type="ChEBI" id="CHEBI:15378"/>
        <dbReference type="ChEBI" id="CHEBI:28938"/>
        <dbReference type="ChEBI" id="CHEBI:30616"/>
        <dbReference type="ChEBI" id="CHEBI:33019"/>
        <dbReference type="ChEBI" id="CHEBI:57540"/>
        <dbReference type="ChEBI" id="CHEBI:58437"/>
        <dbReference type="ChEBI" id="CHEBI:456215"/>
        <dbReference type="EC" id="6.3.1.5"/>
    </reaction>
</comment>
<comment type="pathway">
    <text evidence="1">Cofactor biosynthesis; NAD(+) biosynthesis; NAD(+) from deamido-NAD(+) (ammonia route): step 1/1.</text>
</comment>
<comment type="subunit">
    <text evidence="1">Homodimer.</text>
</comment>
<comment type="similarity">
    <text evidence="1">Belongs to the NAD synthetase family.</text>
</comment>
<feature type="chain" id="PRO_1000191507" description="NH(3)-dependent NAD(+) synthetase">
    <location>
        <begin position="1"/>
        <end position="274"/>
    </location>
</feature>
<feature type="binding site" evidence="1">
    <location>
        <begin position="46"/>
        <end position="53"/>
    </location>
    <ligand>
        <name>ATP</name>
        <dbReference type="ChEBI" id="CHEBI:30616"/>
    </ligand>
</feature>
<feature type="binding site" evidence="1">
    <location>
        <position position="52"/>
    </location>
    <ligand>
        <name>Mg(2+)</name>
        <dbReference type="ChEBI" id="CHEBI:18420"/>
    </ligand>
</feature>
<feature type="binding site" evidence="1">
    <location>
        <position position="140"/>
    </location>
    <ligand>
        <name>deamido-NAD(+)</name>
        <dbReference type="ChEBI" id="CHEBI:58437"/>
    </ligand>
</feature>
<feature type="binding site" evidence="1">
    <location>
        <position position="160"/>
    </location>
    <ligand>
        <name>ATP</name>
        <dbReference type="ChEBI" id="CHEBI:30616"/>
    </ligand>
</feature>
<feature type="binding site" evidence="1">
    <location>
        <position position="165"/>
    </location>
    <ligand>
        <name>Mg(2+)</name>
        <dbReference type="ChEBI" id="CHEBI:18420"/>
    </ligand>
</feature>
<feature type="binding site" evidence="1">
    <location>
        <position position="173"/>
    </location>
    <ligand>
        <name>deamido-NAD(+)</name>
        <dbReference type="ChEBI" id="CHEBI:58437"/>
    </ligand>
</feature>
<feature type="binding site" evidence="1">
    <location>
        <position position="180"/>
    </location>
    <ligand>
        <name>deamido-NAD(+)</name>
        <dbReference type="ChEBI" id="CHEBI:58437"/>
    </ligand>
</feature>
<feature type="binding site" evidence="1">
    <location>
        <position position="189"/>
    </location>
    <ligand>
        <name>ATP</name>
        <dbReference type="ChEBI" id="CHEBI:30616"/>
    </ligand>
</feature>
<feature type="binding site" evidence="1">
    <location>
        <position position="211"/>
    </location>
    <ligand>
        <name>ATP</name>
        <dbReference type="ChEBI" id="CHEBI:30616"/>
    </ligand>
</feature>
<feature type="binding site" evidence="1">
    <location>
        <begin position="260"/>
        <end position="261"/>
    </location>
    <ligand>
        <name>deamido-NAD(+)</name>
        <dbReference type="ChEBI" id="CHEBI:58437"/>
    </ligand>
</feature>
<organism>
    <name type="scientific">Streptococcus equi subsp. equi (strain 4047)</name>
    <dbReference type="NCBI Taxonomy" id="553482"/>
    <lineage>
        <taxon>Bacteria</taxon>
        <taxon>Bacillati</taxon>
        <taxon>Bacillota</taxon>
        <taxon>Bacilli</taxon>
        <taxon>Lactobacillales</taxon>
        <taxon>Streptococcaceae</taxon>
        <taxon>Streptococcus</taxon>
    </lineage>
</organism>
<reference key="1">
    <citation type="journal article" date="2009" name="PLoS Pathog.">
        <title>Genomic evidence for the evolution of Streptococcus equi: host restriction, increased virulence, and genetic exchange with human pathogens.</title>
        <authorList>
            <person name="Holden M.T.G."/>
            <person name="Heather Z."/>
            <person name="Paillot R."/>
            <person name="Steward K.F."/>
            <person name="Webb K."/>
            <person name="Ainslie F."/>
            <person name="Jourdan T."/>
            <person name="Bason N.C."/>
            <person name="Holroyd N.E."/>
            <person name="Mungall K."/>
            <person name="Quail M.A."/>
            <person name="Sanders M."/>
            <person name="Simmonds M."/>
            <person name="Willey D."/>
            <person name="Brooks K."/>
            <person name="Aanensen D.M."/>
            <person name="Spratt B.G."/>
            <person name="Jolley K.A."/>
            <person name="Maiden M.C.J."/>
            <person name="Kehoe M."/>
            <person name="Chanter N."/>
            <person name="Bentley S.D."/>
            <person name="Robinson C."/>
            <person name="Maskell D.J."/>
            <person name="Parkhill J."/>
            <person name="Waller A.S."/>
        </authorList>
    </citation>
    <scope>NUCLEOTIDE SEQUENCE [LARGE SCALE GENOMIC DNA]</scope>
    <source>
        <strain>4047</strain>
    </source>
</reference>
<name>NADE_STRE4</name>
<accession>C0M795</accession>
<sequence length="274" mass="30380">MTLQEDIIRQLEVKAVIDPKQEIRQSVDFLKAYLLKHPFLKTYVLGISGGQDSSLAGKLAQMAIEELRAETGDEQYQFIAVRLPYGVQADEADAQKALAFIQPDQALTVNIKEAVDGQLRALEAAGLEISDFNKGNIKARQRMISQYAIAGQTAGAVIGTDHAAENVTGFFTKFGDGGADILPLFRLTKRQGKALLKVLKADPSLYEKVPTADLEDKKPGLADEVALGVTYQEIDDYLEGHTISAEAQARIEDWWHKGQHKRHLPITIFDDFWK</sequence>